<evidence type="ECO:0000255" key="1">
    <source>
        <dbReference type="HAMAP-Rule" id="MF_00110"/>
    </source>
</evidence>
<dbReference type="EC" id="4.2.3.4" evidence="1"/>
<dbReference type="EMBL" id="CP000088">
    <property type="protein sequence ID" value="AAZ55130.1"/>
    <property type="molecule type" value="Genomic_DNA"/>
</dbReference>
<dbReference type="RefSeq" id="WP_011291539.1">
    <property type="nucleotide sequence ID" value="NC_007333.1"/>
</dbReference>
<dbReference type="SMR" id="Q47QY7"/>
<dbReference type="STRING" id="269800.Tfu_1092"/>
<dbReference type="KEGG" id="tfu:Tfu_1092"/>
<dbReference type="eggNOG" id="COG0337">
    <property type="taxonomic scope" value="Bacteria"/>
</dbReference>
<dbReference type="HOGENOM" id="CLU_001201_0_3_11"/>
<dbReference type="OrthoDB" id="9806583at2"/>
<dbReference type="UniPathway" id="UPA00053">
    <property type="reaction ID" value="UER00085"/>
</dbReference>
<dbReference type="GO" id="GO:0005737">
    <property type="term" value="C:cytoplasm"/>
    <property type="evidence" value="ECO:0007669"/>
    <property type="project" value="UniProtKB-SubCell"/>
</dbReference>
<dbReference type="GO" id="GO:0003856">
    <property type="term" value="F:3-dehydroquinate synthase activity"/>
    <property type="evidence" value="ECO:0007669"/>
    <property type="project" value="UniProtKB-UniRule"/>
</dbReference>
<dbReference type="GO" id="GO:0046872">
    <property type="term" value="F:metal ion binding"/>
    <property type="evidence" value="ECO:0007669"/>
    <property type="project" value="UniProtKB-KW"/>
</dbReference>
<dbReference type="GO" id="GO:0000166">
    <property type="term" value="F:nucleotide binding"/>
    <property type="evidence" value="ECO:0007669"/>
    <property type="project" value="UniProtKB-KW"/>
</dbReference>
<dbReference type="GO" id="GO:0008652">
    <property type="term" value="P:amino acid biosynthetic process"/>
    <property type="evidence" value="ECO:0007669"/>
    <property type="project" value="UniProtKB-KW"/>
</dbReference>
<dbReference type="GO" id="GO:0009073">
    <property type="term" value="P:aromatic amino acid family biosynthetic process"/>
    <property type="evidence" value="ECO:0007669"/>
    <property type="project" value="UniProtKB-KW"/>
</dbReference>
<dbReference type="GO" id="GO:0009423">
    <property type="term" value="P:chorismate biosynthetic process"/>
    <property type="evidence" value="ECO:0007669"/>
    <property type="project" value="UniProtKB-UniRule"/>
</dbReference>
<dbReference type="CDD" id="cd08195">
    <property type="entry name" value="DHQS"/>
    <property type="match status" value="1"/>
</dbReference>
<dbReference type="FunFam" id="3.40.50.1970:FF:000012">
    <property type="entry name" value="3-dehydroquinate synthase"/>
    <property type="match status" value="1"/>
</dbReference>
<dbReference type="Gene3D" id="3.40.50.1970">
    <property type="match status" value="1"/>
</dbReference>
<dbReference type="Gene3D" id="1.20.1090.10">
    <property type="entry name" value="Dehydroquinate synthase-like - alpha domain"/>
    <property type="match status" value="1"/>
</dbReference>
<dbReference type="HAMAP" id="MF_00110">
    <property type="entry name" value="DHQ_synthase"/>
    <property type="match status" value="1"/>
</dbReference>
<dbReference type="InterPro" id="IPR050071">
    <property type="entry name" value="Dehydroquinate_synthase"/>
</dbReference>
<dbReference type="InterPro" id="IPR016037">
    <property type="entry name" value="DHQ_synth_AroB"/>
</dbReference>
<dbReference type="InterPro" id="IPR030963">
    <property type="entry name" value="DHQ_synth_fam"/>
</dbReference>
<dbReference type="InterPro" id="IPR030960">
    <property type="entry name" value="DHQS/DOIS_N"/>
</dbReference>
<dbReference type="InterPro" id="IPR056179">
    <property type="entry name" value="DHQS_C"/>
</dbReference>
<dbReference type="NCBIfam" id="TIGR01357">
    <property type="entry name" value="aroB"/>
    <property type="match status" value="1"/>
</dbReference>
<dbReference type="PANTHER" id="PTHR43622">
    <property type="entry name" value="3-DEHYDROQUINATE SYNTHASE"/>
    <property type="match status" value="1"/>
</dbReference>
<dbReference type="PANTHER" id="PTHR43622:SF7">
    <property type="entry name" value="3-DEHYDROQUINATE SYNTHASE, CHLOROPLASTIC"/>
    <property type="match status" value="1"/>
</dbReference>
<dbReference type="Pfam" id="PF01761">
    <property type="entry name" value="DHQ_synthase"/>
    <property type="match status" value="1"/>
</dbReference>
<dbReference type="Pfam" id="PF24621">
    <property type="entry name" value="DHQS_C"/>
    <property type="match status" value="1"/>
</dbReference>
<dbReference type="PIRSF" id="PIRSF001455">
    <property type="entry name" value="DHQ_synth"/>
    <property type="match status" value="1"/>
</dbReference>
<dbReference type="SUPFAM" id="SSF56796">
    <property type="entry name" value="Dehydroquinate synthase-like"/>
    <property type="match status" value="1"/>
</dbReference>
<accession>Q47QY7</accession>
<feature type="chain" id="PRO_0000231138" description="3-dehydroquinate synthase">
    <location>
        <begin position="1"/>
        <end position="368"/>
    </location>
</feature>
<feature type="binding site" evidence="1">
    <location>
        <begin position="71"/>
        <end position="76"/>
    </location>
    <ligand>
        <name>NAD(+)</name>
        <dbReference type="ChEBI" id="CHEBI:57540"/>
    </ligand>
</feature>
<feature type="binding site" evidence="1">
    <location>
        <begin position="105"/>
        <end position="109"/>
    </location>
    <ligand>
        <name>NAD(+)</name>
        <dbReference type="ChEBI" id="CHEBI:57540"/>
    </ligand>
</feature>
<feature type="binding site" evidence="1">
    <location>
        <begin position="129"/>
        <end position="130"/>
    </location>
    <ligand>
        <name>NAD(+)</name>
        <dbReference type="ChEBI" id="CHEBI:57540"/>
    </ligand>
</feature>
<feature type="binding site" evidence="1">
    <location>
        <position position="142"/>
    </location>
    <ligand>
        <name>NAD(+)</name>
        <dbReference type="ChEBI" id="CHEBI:57540"/>
    </ligand>
</feature>
<feature type="binding site" evidence="1">
    <location>
        <position position="151"/>
    </location>
    <ligand>
        <name>NAD(+)</name>
        <dbReference type="ChEBI" id="CHEBI:57540"/>
    </ligand>
</feature>
<feature type="binding site" evidence="1">
    <location>
        <position position="184"/>
    </location>
    <ligand>
        <name>Zn(2+)</name>
        <dbReference type="ChEBI" id="CHEBI:29105"/>
    </ligand>
</feature>
<feature type="binding site" evidence="1">
    <location>
        <position position="247"/>
    </location>
    <ligand>
        <name>Zn(2+)</name>
        <dbReference type="ChEBI" id="CHEBI:29105"/>
    </ligand>
</feature>
<feature type="binding site" evidence="1">
    <location>
        <position position="263"/>
    </location>
    <ligand>
        <name>Zn(2+)</name>
        <dbReference type="ChEBI" id="CHEBI:29105"/>
    </ligand>
</feature>
<gene>
    <name evidence="1" type="primary">aroB</name>
    <name type="ordered locus">Tfu_1092</name>
</gene>
<protein>
    <recommendedName>
        <fullName evidence="1">3-dehydroquinate synthase</fullName>
        <shortName evidence="1">DHQS</shortName>
        <ecNumber evidence="1">4.2.3.4</ecNumber>
    </recommendedName>
</protein>
<proteinExistence type="inferred from homology"/>
<comment type="function">
    <text evidence="1">Catalyzes the conversion of 3-deoxy-D-arabino-heptulosonate 7-phosphate (DAHP) to dehydroquinate (DHQ).</text>
</comment>
<comment type="catalytic activity">
    <reaction evidence="1">
        <text>7-phospho-2-dehydro-3-deoxy-D-arabino-heptonate = 3-dehydroquinate + phosphate</text>
        <dbReference type="Rhea" id="RHEA:21968"/>
        <dbReference type="ChEBI" id="CHEBI:32364"/>
        <dbReference type="ChEBI" id="CHEBI:43474"/>
        <dbReference type="ChEBI" id="CHEBI:58394"/>
        <dbReference type="EC" id="4.2.3.4"/>
    </reaction>
</comment>
<comment type="cofactor">
    <cofactor evidence="1">
        <name>Co(2+)</name>
        <dbReference type="ChEBI" id="CHEBI:48828"/>
    </cofactor>
    <cofactor evidence="1">
        <name>Zn(2+)</name>
        <dbReference type="ChEBI" id="CHEBI:29105"/>
    </cofactor>
    <text evidence="1">Binds 1 divalent metal cation per subunit. Can use either Co(2+) or Zn(2+).</text>
</comment>
<comment type="cofactor">
    <cofactor evidence="1">
        <name>NAD(+)</name>
        <dbReference type="ChEBI" id="CHEBI:57540"/>
    </cofactor>
</comment>
<comment type="pathway">
    <text evidence="1">Metabolic intermediate biosynthesis; chorismate biosynthesis; chorismate from D-erythrose 4-phosphate and phosphoenolpyruvate: step 2/7.</text>
</comment>
<comment type="subcellular location">
    <subcellularLocation>
        <location evidence="1">Cytoplasm</location>
    </subcellularLocation>
</comment>
<comment type="similarity">
    <text evidence="1">Belongs to the sugar phosphate cyclases superfamily. Dehydroquinate synthase family.</text>
</comment>
<organism>
    <name type="scientific">Thermobifida fusca (strain YX)</name>
    <dbReference type="NCBI Taxonomy" id="269800"/>
    <lineage>
        <taxon>Bacteria</taxon>
        <taxon>Bacillati</taxon>
        <taxon>Actinomycetota</taxon>
        <taxon>Actinomycetes</taxon>
        <taxon>Streptosporangiales</taxon>
        <taxon>Nocardiopsidaceae</taxon>
        <taxon>Thermobifida</taxon>
    </lineage>
</organism>
<sequence length="368" mass="38705">MTVTRIGVGGTSTPYDVVVGNGILGELPALVGERAQRVAVIHPDTLEEKARPVCEILRTAGYDVFPLPVPDGEAAKDVSVAADLWARLGQAAFTRTDVIVGVGGGATTDLAGFVAATWLRGVRAILVPTTLLGMVDAAVGGKTGINTAEGKNLVGAFHPPAGVVCDLDTLPSLPREDYIGGLAEVIKAGFIADPVILDLVEADPEAATRPDGAHTRELIERAIAVKAEVVSADLRESGRREILNYGHTLGHAIERAENYTFRHGYAISIGMVFAAELARLDGRIDAALVARHRRILESVGLPVRYRADAWPALRDTIRVDKKTRGATLRFVVLDDVAAPAILAGPSDALLAQAYQAVSGVAPDAPDTD</sequence>
<name>AROB_THEFY</name>
<reference key="1">
    <citation type="journal article" date="2007" name="J. Bacteriol.">
        <title>Genome sequence and analysis of the soil cellulolytic actinomycete Thermobifida fusca YX.</title>
        <authorList>
            <person name="Lykidis A."/>
            <person name="Mavromatis K."/>
            <person name="Ivanova N."/>
            <person name="Anderson I."/>
            <person name="Land M."/>
            <person name="DiBartolo G."/>
            <person name="Martinez M."/>
            <person name="Lapidus A."/>
            <person name="Lucas S."/>
            <person name="Copeland A."/>
            <person name="Richardson P."/>
            <person name="Wilson D.B."/>
            <person name="Kyrpides N."/>
        </authorList>
    </citation>
    <scope>NUCLEOTIDE SEQUENCE [LARGE SCALE GENOMIC DNA]</scope>
    <source>
        <strain>YX</strain>
    </source>
</reference>
<keyword id="KW-0028">Amino-acid biosynthesis</keyword>
<keyword id="KW-0057">Aromatic amino acid biosynthesis</keyword>
<keyword id="KW-0170">Cobalt</keyword>
<keyword id="KW-0963">Cytoplasm</keyword>
<keyword id="KW-0456">Lyase</keyword>
<keyword id="KW-0479">Metal-binding</keyword>
<keyword id="KW-0520">NAD</keyword>
<keyword id="KW-0547">Nucleotide-binding</keyword>
<keyword id="KW-0862">Zinc</keyword>